<proteinExistence type="inferred from homology"/>
<keyword id="KW-0030">Aminoacyl-tRNA synthetase</keyword>
<keyword id="KW-0067">ATP-binding</keyword>
<keyword id="KW-0963">Cytoplasm</keyword>
<keyword id="KW-0436">Ligase</keyword>
<keyword id="KW-0547">Nucleotide-binding</keyword>
<keyword id="KW-0648">Protein biosynthesis</keyword>
<organism>
    <name type="scientific">Pyrobaculum calidifontis (strain DSM 21063 / JCM 11548 / VA1)</name>
    <dbReference type="NCBI Taxonomy" id="410359"/>
    <lineage>
        <taxon>Archaea</taxon>
        <taxon>Thermoproteota</taxon>
        <taxon>Thermoprotei</taxon>
        <taxon>Thermoproteales</taxon>
        <taxon>Thermoproteaceae</taxon>
        <taxon>Pyrobaculum</taxon>
    </lineage>
</organism>
<comment type="function">
    <text evidence="1">Catalyzes the attachment of serine to tRNA(Ser). Is also able to aminoacylate tRNA(Sec) with serine, to form the misacylated tRNA L-seryl-tRNA(Sec), which will be further converted into selenocysteinyl-tRNA(Sec).</text>
</comment>
<comment type="catalytic activity">
    <reaction evidence="1">
        <text>tRNA(Ser) + L-serine + ATP = L-seryl-tRNA(Ser) + AMP + diphosphate + H(+)</text>
        <dbReference type="Rhea" id="RHEA:12292"/>
        <dbReference type="Rhea" id="RHEA-COMP:9669"/>
        <dbReference type="Rhea" id="RHEA-COMP:9703"/>
        <dbReference type="ChEBI" id="CHEBI:15378"/>
        <dbReference type="ChEBI" id="CHEBI:30616"/>
        <dbReference type="ChEBI" id="CHEBI:33019"/>
        <dbReference type="ChEBI" id="CHEBI:33384"/>
        <dbReference type="ChEBI" id="CHEBI:78442"/>
        <dbReference type="ChEBI" id="CHEBI:78533"/>
        <dbReference type="ChEBI" id="CHEBI:456215"/>
        <dbReference type="EC" id="6.1.1.11"/>
    </reaction>
</comment>
<comment type="catalytic activity">
    <reaction evidence="1">
        <text>tRNA(Sec) + L-serine + ATP = L-seryl-tRNA(Sec) + AMP + diphosphate + H(+)</text>
        <dbReference type="Rhea" id="RHEA:42580"/>
        <dbReference type="Rhea" id="RHEA-COMP:9742"/>
        <dbReference type="Rhea" id="RHEA-COMP:10128"/>
        <dbReference type="ChEBI" id="CHEBI:15378"/>
        <dbReference type="ChEBI" id="CHEBI:30616"/>
        <dbReference type="ChEBI" id="CHEBI:33019"/>
        <dbReference type="ChEBI" id="CHEBI:33384"/>
        <dbReference type="ChEBI" id="CHEBI:78442"/>
        <dbReference type="ChEBI" id="CHEBI:78533"/>
        <dbReference type="ChEBI" id="CHEBI:456215"/>
        <dbReference type="EC" id="6.1.1.11"/>
    </reaction>
</comment>
<comment type="pathway">
    <text evidence="1">Aminoacyl-tRNA biosynthesis; selenocysteinyl-tRNA(Sec) biosynthesis; L-seryl-tRNA(Sec) from L-serine and tRNA(Sec): step 1/1.</text>
</comment>
<comment type="subunit">
    <text evidence="1">Homodimer. The tRNA molecule binds across the dimer.</text>
</comment>
<comment type="subcellular location">
    <subcellularLocation>
        <location evidence="1">Cytoplasm</location>
    </subcellularLocation>
</comment>
<comment type="domain">
    <text evidence="1">Consists of two distinct domains, a catalytic core and a N-terminal extension that is involved in tRNA binding.</text>
</comment>
<comment type="similarity">
    <text evidence="1">Belongs to the class-II aminoacyl-tRNA synthetase family. Type-1 seryl-tRNA synthetase subfamily.</text>
</comment>
<protein>
    <recommendedName>
        <fullName evidence="1">Serine--tRNA ligase</fullName>
        <ecNumber evidence="1">6.1.1.11</ecNumber>
    </recommendedName>
    <alternativeName>
        <fullName evidence="1">Seryl-tRNA synthetase</fullName>
        <shortName evidence="1">SerRS</shortName>
    </alternativeName>
    <alternativeName>
        <fullName evidence="1">Seryl-tRNA(Ser/Sec) synthetase</fullName>
    </alternativeName>
</protein>
<dbReference type="EC" id="6.1.1.11" evidence="1"/>
<dbReference type="EMBL" id="CP000561">
    <property type="protein sequence ID" value="ABO09219.1"/>
    <property type="molecule type" value="Genomic_DNA"/>
</dbReference>
<dbReference type="RefSeq" id="WP_011850478.1">
    <property type="nucleotide sequence ID" value="NC_009073.1"/>
</dbReference>
<dbReference type="SMR" id="A3MX52"/>
<dbReference type="STRING" id="410359.Pcal_1802"/>
<dbReference type="GeneID" id="4909627"/>
<dbReference type="KEGG" id="pcl:Pcal_1802"/>
<dbReference type="eggNOG" id="arCOG00403">
    <property type="taxonomic scope" value="Archaea"/>
</dbReference>
<dbReference type="HOGENOM" id="CLU_023797_0_1_2"/>
<dbReference type="OrthoDB" id="35932at2157"/>
<dbReference type="UniPathway" id="UPA00906">
    <property type="reaction ID" value="UER00895"/>
</dbReference>
<dbReference type="Proteomes" id="UP000001431">
    <property type="component" value="Chromosome"/>
</dbReference>
<dbReference type="GO" id="GO:0005737">
    <property type="term" value="C:cytoplasm"/>
    <property type="evidence" value="ECO:0007669"/>
    <property type="project" value="UniProtKB-SubCell"/>
</dbReference>
<dbReference type="GO" id="GO:0005524">
    <property type="term" value="F:ATP binding"/>
    <property type="evidence" value="ECO:0007669"/>
    <property type="project" value="UniProtKB-UniRule"/>
</dbReference>
<dbReference type="GO" id="GO:0004828">
    <property type="term" value="F:serine-tRNA ligase activity"/>
    <property type="evidence" value="ECO:0007669"/>
    <property type="project" value="UniProtKB-UniRule"/>
</dbReference>
<dbReference type="GO" id="GO:0016260">
    <property type="term" value="P:selenocysteine biosynthetic process"/>
    <property type="evidence" value="ECO:0007669"/>
    <property type="project" value="UniProtKB-UniRule"/>
</dbReference>
<dbReference type="GO" id="GO:0006434">
    <property type="term" value="P:seryl-tRNA aminoacylation"/>
    <property type="evidence" value="ECO:0007669"/>
    <property type="project" value="UniProtKB-UniRule"/>
</dbReference>
<dbReference type="CDD" id="cd00770">
    <property type="entry name" value="SerRS_core"/>
    <property type="match status" value="1"/>
</dbReference>
<dbReference type="Gene3D" id="3.30.930.10">
    <property type="entry name" value="Bira Bifunctional Protein, Domain 2"/>
    <property type="match status" value="1"/>
</dbReference>
<dbReference type="Gene3D" id="1.10.287.40">
    <property type="entry name" value="Serine-tRNA synthetase, tRNA binding domain"/>
    <property type="match status" value="1"/>
</dbReference>
<dbReference type="HAMAP" id="MF_00176">
    <property type="entry name" value="Ser_tRNA_synth_type1"/>
    <property type="match status" value="1"/>
</dbReference>
<dbReference type="InterPro" id="IPR002314">
    <property type="entry name" value="aa-tRNA-synt_IIb"/>
</dbReference>
<dbReference type="InterPro" id="IPR006195">
    <property type="entry name" value="aa-tRNA-synth_II"/>
</dbReference>
<dbReference type="InterPro" id="IPR045864">
    <property type="entry name" value="aa-tRNA-synth_II/BPL/LPL"/>
</dbReference>
<dbReference type="InterPro" id="IPR002317">
    <property type="entry name" value="Ser-tRNA-ligase_type_1"/>
</dbReference>
<dbReference type="InterPro" id="IPR015866">
    <property type="entry name" value="Ser-tRNA-synth_1_N"/>
</dbReference>
<dbReference type="InterPro" id="IPR042103">
    <property type="entry name" value="SerRS_1_N_sf"/>
</dbReference>
<dbReference type="InterPro" id="IPR033729">
    <property type="entry name" value="SerRS_core"/>
</dbReference>
<dbReference type="InterPro" id="IPR010978">
    <property type="entry name" value="tRNA-bd_arm"/>
</dbReference>
<dbReference type="NCBIfam" id="TIGR00414">
    <property type="entry name" value="serS"/>
    <property type="match status" value="1"/>
</dbReference>
<dbReference type="PANTHER" id="PTHR11778">
    <property type="entry name" value="SERYL-TRNA SYNTHETASE"/>
    <property type="match status" value="1"/>
</dbReference>
<dbReference type="Pfam" id="PF02403">
    <property type="entry name" value="Seryl_tRNA_N"/>
    <property type="match status" value="1"/>
</dbReference>
<dbReference type="Pfam" id="PF00587">
    <property type="entry name" value="tRNA-synt_2b"/>
    <property type="match status" value="1"/>
</dbReference>
<dbReference type="PIRSF" id="PIRSF001529">
    <property type="entry name" value="Ser-tRNA-synth_IIa"/>
    <property type="match status" value="1"/>
</dbReference>
<dbReference type="PRINTS" id="PR00981">
    <property type="entry name" value="TRNASYNTHSER"/>
</dbReference>
<dbReference type="SUPFAM" id="SSF55681">
    <property type="entry name" value="Class II aaRS and biotin synthetases"/>
    <property type="match status" value="1"/>
</dbReference>
<dbReference type="SUPFAM" id="SSF46589">
    <property type="entry name" value="tRNA-binding arm"/>
    <property type="match status" value="1"/>
</dbReference>
<dbReference type="PROSITE" id="PS50862">
    <property type="entry name" value="AA_TRNA_LIGASE_II"/>
    <property type="match status" value="1"/>
</dbReference>
<feature type="chain" id="PRO_1000019785" description="Serine--tRNA ligase">
    <location>
        <begin position="1"/>
        <end position="454"/>
    </location>
</feature>
<feature type="binding site" evidence="1">
    <location>
        <begin position="247"/>
        <end position="249"/>
    </location>
    <ligand>
        <name>L-serine</name>
        <dbReference type="ChEBI" id="CHEBI:33384"/>
    </ligand>
</feature>
<feature type="binding site" evidence="1">
    <location>
        <begin position="278"/>
        <end position="280"/>
    </location>
    <ligand>
        <name>ATP</name>
        <dbReference type="ChEBI" id="CHEBI:30616"/>
    </ligand>
</feature>
<feature type="binding site" evidence="1">
    <location>
        <position position="294"/>
    </location>
    <ligand>
        <name>ATP</name>
        <dbReference type="ChEBI" id="CHEBI:30616"/>
    </ligand>
</feature>
<feature type="binding site" evidence="1">
    <location>
        <position position="301"/>
    </location>
    <ligand>
        <name>L-serine</name>
        <dbReference type="ChEBI" id="CHEBI:33384"/>
    </ligand>
</feature>
<feature type="binding site" evidence="1">
    <location>
        <begin position="365"/>
        <end position="368"/>
    </location>
    <ligand>
        <name>ATP</name>
        <dbReference type="ChEBI" id="CHEBI:30616"/>
    </ligand>
</feature>
<feature type="binding site" evidence="1">
    <location>
        <position position="400"/>
    </location>
    <ligand>
        <name>L-serine</name>
        <dbReference type="ChEBI" id="CHEBI:33384"/>
    </ligand>
</feature>
<gene>
    <name evidence="1" type="primary">serS</name>
    <name type="ordered locus">Pcal_1802</name>
</gene>
<sequence length="454" mass="52428">MSYSVLEALRKSPEEVRKVLLARRVDASLVDKFLALDAKWRQLKKEIDELRHLYNQLSREGAKAPPERRREISEKARELAAKLEKVEEEVKELERQREELLYSFPNLIHESVPVCPEGVDSVPVRHWGTVKVSNAALQSLDPGVEYVVVEKEPVGHADMAEVVLQMADTLKAGEVAGSRFYYLFDDLVWLDFALAMYAMDQLAQKGFRPVIPPYMLKFDIIRRVLDFDTFKDAIYKIEGEDLYLIATAEHGIAAYLYKRELLEEELPQLYVGWSPCFRKEAGAGNRDLKGIFRVHIFHKVEQFVFSLPEESWKWHEEITRNTEELIRGLGLPYRVVNICAHDLGAPAAKKYDIEVWYPAQAKYRELASCSNVTDWQSYRLGIRVTRKGMKKEYVHTLNCTGLATTRTITAILENFQRDDGVVEIPKALRPYLEPIKAAPKEYIYPRRIKQQPPS</sequence>
<reference key="1">
    <citation type="submission" date="2007-02" db="EMBL/GenBank/DDBJ databases">
        <title>Complete sequence of Pyrobaculum calidifontis JCM 11548.</title>
        <authorList>
            <consortium name="US DOE Joint Genome Institute"/>
            <person name="Copeland A."/>
            <person name="Lucas S."/>
            <person name="Lapidus A."/>
            <person name="Barry K."/>
            <person name="Glavina del Rio T."/>
            <person name="Dalin E."/>
            <person name="Tice H."/>
            <person name="Pitluck S."/>
            <person name="Chain P."/>
            <person name="Malfatti S."/>
            <person name="Shin M."/>
            <person name="Vergez L."/>
            <person name="Schmutz J."/>
            <person name="Larimer F."/>
            <person name="Land M."/>
            <person name="Hauser L."/>
            <person name="Kyrpides N."/>
            <person name="Mikhailova N."/>
            <person name="Cozen A.E."/>
            <person name="Fitz-Gibbon S.T."/>
            <person name="House C.H."/>
            <person name="Saltikov C."/>
            <person name="Lowe T.M."/>
            <person name="Richardson P."/>
        </authorList>
    </citation>
    <scope>NUCLEOTIDE SEQUENCE [LARGE SCALE GENOMIC DNA]</scope>
    <source>
        <strain>DSM 21063 / JCM 11548 / VA1</strain>
    </source>
</reference>
<accession>A3MX52</accession>
<name>SYS_PYRCJ</name>
<evidence type="ECO:0000255" key="1">
    <source>
        <dbReference type="HAMAP-Rule" id="MF_00176"/>
    </source>
</evidence>